<accession>A9VSH6</accession>
<proteinExistence type="inferred from homology"/>
<dbReference type="EMBL" id="CP000903">
    <property type="protein sequence ID" value="ABY46322.1"/>
    <property type="status" value="ALT_INIT"/>
    <property type="molecule type" value="Genomic_DNA"/>
</dbReference>
<dbReference type="RefSeq" id="WP_000526075.1">
    <property type="nucleotide sequence ID" value="NZ_CAKMRX030000121.1"/>
</dbReference>
<dbReference type="SMR" id="A9VSH6"/>
<dbReference type="KEGG" id="bwe:BcerKBAB4_5177"/>
<dbReference type="eggNOG" id="COG4844">
    <property type="taxonomic scope" value="Bacteria"/>
</dbReference>
<dbReference type="HOGENOM" id="CLU_163820_1_0_9"/>
<dbReference type="Proteomes" id="UP000002154">
    <property type="component" value="Chromosome"/>
</dbReference>
<dbReference type="HAMAP" id="MF_01863">
    <property type="entry name" value="UPF0741"/>
    <property type="match status" value="1"/>
</dbReference>
<dbReference type="InterPro" id="IPR009910">
    <property type="entry name" value="DUF1450"/>
</dbReference>
<dbReference type="InterPro" id="IPR020880">
    <property type="entry name" value="UPF0741"/>
</dbReference>
<dbReference type="Pfam" id="PF07293">
    <property type="entry name" value="DUF1450"/>
    <property type="match status" value="1"/>
</dbReference>
<comment type="similarity">
    <text evidence="1">Belongs to the UPF0741 family.</text>
</comment>
<comment type="sequence caution" evidence="2">
    <conflict type="erroneous initiation">
        <sequence resource="EMBL-CDS" id="ABY46322"/>
    </conflict>
</comment>
<feature type="chain" id="PRO_0000372741" description="UPF0741 protein BcerKBAB4_5177">
    <location>
        <begin position="1"/>
        <end position="74"/>
    </location>
</feature>
<sequence>MGNEFRVCDDCQATNVKTLIPKLKKVDSCATIEVACQSYCGPGRKKSFAFVNNRPVAAPTEDELIVKIEAKLNK</sequence>
<organism>
    <name type="scientific">Bacillus mycoides (strain KBAB4)</name>
    <name type="common">Bacillus weihenstephanensis</name>
    <dbReference type="NCBI Taxonomy" id="315730"/>
    <lineage>
        <taxon>Bacteria</taxon>
        <taxon>Bacillati</taxon>
        <taxon>Bacillota</taxon>
        <taxon>Bacilli</taxon>
        <taxon>Bacillales</taxon>
        <taxon>Bacillaceae</taxon>
        <taxon>Bacillus</taxon>
        <taxon>Bacillus cereus group</taxon>
    </lineage>
</organism>
<name>Y5177_BACMK</name>
<protein>
    <recommendedName>
        <fullName evidence="1">UPF0741 protein BcerKBAB4_5177</fullName>
    </recommendedName>
</protein>
<gene>
    <name type="ordered locus">BcerKBAB4_5177</name>
</gene>
<evidence type="ECO:0000255" key="1">
    <source>
        <dbReference type="HAMAP-Rule" id="MF_01863"/>
    </source>
</evidence>
<evidence type="ECO:0000305" key="2"/>
<reference key="1">
    <citation type="journal article" date="2008" name="Chem. Biol. Interact.">
        <title>Extending the Bacillus cereus group genomics to putative food-borne pathogens of different toxicity.</title>
        <authorList>
            <person name="Lapidus A."/>
            <person name="Goltsman E."/>
            <person name="Auger S."/>
            <person name="Galleron N."/>
            <person name="Segurens B."/>
            <person name="Dossat C."/>
            <person name="Land M.L."/>
            <person name="Broussolle V."/>
            <person name="Brillard J."/>
            <person name="Guinebretiere M.-H."/>
            <person name="Sanchis V."/>
            <person name="Nguen-the C."/>
            <person name="Lereclus D."/>
            <person name="Richardson P."/>
            <person name="Wincker P."/>
            <person name="Weissenbach J."/>
            <person name="Ehrlich S.D."/>
            <person name="Sorokin A."/>
        </authorList>
    </citation>
    <scope>NUCLEOTIDE SEQUENCE [LARGE SCALE GENOMIC DNA]</scope>
    <source>
        <strain>KBAB4</strain>
    </source>
</reference>